<feature type="chain" id="PRO_1000018509" description="Indole-3-glycerol phosphate synthase">
    <location>
        <begin position="1"/>
        <end position="260"/>
    </location>
</feature>
<name>TRPC_NEIMF</name>
<dbReference type="EC" id="4.1.1.48" evidence="1"/>
<dbReference type="EMBL" id="AM421808">
    <property type="protein sequence ID" value="CAM09583.1"/>
    <property type="molecule type" value="Genomic_DNA"/>
</dbReference>
<dbReference type="RefSeq" id="WP_002221587.1">
    <property type="nucleotide sequence ID" value="NC_008767.1"/>
</dbReference>
<dbReference type="SMR" id="A1KRV4"/>
<dbReference type="KEGG" id="nmc:NMC0270"/>
<dbReference type="HOGENOM" id="CLU_034247_2_0_4"/>
<dbReference type="UniPathway" id="UPA00035">
    <property type="reaction ID" value="UER00043"/>
</dbReference>
<dbReference type="Proteomes" id="UP000002286">
    <property type="component" value="Chromosome"/>
</dbReference>
<dbReference type="GO" id="GO:0004425">
    <property type="term" value="F:indole-3-glycerol-phosphate synthase activity"/>
    <property type="evidence" value="ECO:0007669"/>
    <property type="project" value="UniProtKB-UniRule"/>
</dbReference>
<dbReference type="GO" id="GO:0004640">
    <property type="term" value="F:phosphoribosylanthranilate isomerase activity"/>
    <property type="evidence" value="ECO:0007669"/>
    <property type="project" value="TreeGrafter"/>
</dbReference>
<dbReference type="GO" id="GO:0000162">
    <property type="term" value="P:L-tryptophan biosynthetic process"/>
    <property type="evidence" value="ECO:0007669"/>
    <property type="project" value="UniProtKB-UniRule"/>
</dbReference>
<dbReference type="CDD" id="cd00331">
    <property type="entry name" value="IGPS"/>
    <property type="match status" value="1"/>
</dbReference>
<dbReference type="FunFam" id="3.20.20.70:FF:000024">
    <property type="entry name" value="Indole-3-glycerol phosphate synthase"/>
    <property type="match status" value="1"/>
</dbReference>
<dbReference type="Gene3D" id="3.20.20.70">
    <property type="entry name" value="Aldolase class I"/>
    <property type="match status" value="1"/>
</dbReference>
<dbReference type="HAMAP" id="MF_00134_B">
    <property type="entry name" value="IGPS_B"/>
    <property type="match status" value="1"/>
</dbReference>
<dbReference type="InterPro" id="IPR013785">
    <property type="entry name" value="Aldolase_TIM"/>
</dbReference>
<dbReference type="InterPro" id="IPR045186">
    <property type="entry name" value="Indole-3-glycerol_P_synth"/>
</dbReference>
<dbReference type="InterPro" id="IPR013798">
    <property type="entry name" value="Indole-3-glycerol_P_synth_dom"/>
</dbReference>
<dbReference type="InterPro" id="IPR001468">
    <property type="entry name" value="Indole-3-GlycerolPSynthase_CS"/>
</dbReference>
<dbReference type="InterPro" id="IPR011060">
    <property type="entry name" value="RibuloseP-bd_barrel"/>
</dbReference>
<dbReference type="NCBIfam" id="NF001373">
    <property type="entry name" value="PRK00278.1-6"/>
    <property type="match status" value="1"/>
</dbReference>
<dbReference type="NCBIfam" id="NF001377">
    <property type="entry name" value="PRK00278.2-4"/>
    <property type="match status" value="1"/>
</dbReference>
<dbReference type="PANTHER" id="PTHR22854:SF2">
    <property type="entry name" value="INDOLE-3-GLYCEROL-PHOSPHATE SYNTHASE"/>
    <property type="match status" value="1"/>
</dbReference>
<dbReference type="PANTHER" id="PTHR22854">
    <property type="entry name" value="TRYPTOPHAN BIOSYNTHESIS PROTEIN"/>
    <property type="match status" value="1"/>
</dbReference>
<dbReference type="Pfam" id="PF00218">
    <property type="entry name" value="IGPS"/>
    <property type="match status" value="1"/>
</dbReference>
<dbReference type="SUPFAM" id="SSF51366">
    <property type="entry name" value="Ribulose-phoshate binding barrel"/>
    <property type="match status" value="1"/>
</dbReference>
<dbReference type="PROSITE" id="PS00614">
    <property type="entry name" value="IGPS"/>
    <property type="match status" value="1"/>
</dbReference>
<proteinExistence type="inferred from homology"/>
<comment type="catalytic activity">
    <reaction evidence="1">
        <text>1-(2-carboxyphenylamino)-1-deoxy-D-ribulose 5-phosphate + H(+) = (1S,2R)-1-C-(indol-3-yl)glycerol 3-phosphate + CO2 + H2O</text>
        <dbReference type="Rhea" id="RHEA:23476"/>
        <dbReference type="ChEBI" id="CHEBI:15377"/>
        <dbReference type="ChEBI" id="CHEBI:15378"/>
        <dbReference type="ChEBI" id="CHEBI:16526"/>
        <dbReference type="ChEBI" id="CHEBI:58613"/>
        <dbReference type="ChEBI" id="CHEBI:58866"/>
        <dbReference type="EC" id="4.1.1.48"/>
    </reaction>
</comment>
<comment type="pathway">
    <text evidence="1">Amino-acid biosynthesis; L-tryptophan biosynthesis; L-tryptophan from chorismate: step 4/5.</text>
</comment>
<comment type="similarity">
    <text evidence="1">Belongs to the TrpC family.</text>
</comment>
<reference key="1">
    <citation type="journal article" date="2007" name="PLoS Genet.">
        <title>Meningococcal genetic variation mechanisms viewed through comparative analysis of serogroup C strain FAM18.</title>
        <authorList>
            <person name="Bentley S.D."/>
            <person name="Vernikos G.S."/>
            <person name="Snyder L.A.S."/>
            <person name="Churcher C."/>
            <person name="Arrowsmith C."/>
            <person name="Chillingworth T."/>
            <person name="Cronin A."/>
            <person name="Davis P.H."/>
            <person name="Holroyd N.E."/>
            <person name="Jagels K."/>
            <person name="Maddison M."/>
            <person name="Moule S."/>
            <person name="Rabbinowitsch E."/>
            <person name="Sharp S."/>
            <person name="Unwin L."/>
            <person name="Whitehead S."/>
            <person name="Quail M.A."/>
            <person name="Achtman M."/>
            <person name="Barrell B.G."/>
            <person name="Saunders N.J."/>
            <person name="Parkhill J."/>
        </authorList>
    </citation>
    <scope>NUCLEOTIDE SEQUENCE [LARGE SCALE GENOMIC DNA]</scope>
    <source>
        <strain>ATCC 700532 / DSM 15464 / FAM18</strain>
    </source>
</reference>
<evidence type="ECO:0000255" key="1">
    <source>
        <dbReference type="HAMAP-Rule" id="MF_00134"/>
    </source>
</evidence>
<organism>
    <name type="scientific">Neisseria meningitidis serogroup C / serotype 2a (strain ATCC 700532 / DSM 15464 / FAM18)</name>
    <dbReference type="NCBI Taxonomy" id="272831"/>
    <lineage>
        <taxon>Bacteria</taxon>
        <taxon>Pseudomonadati</taxon>
        <taxon>Pseudomonadota</taxon>
        <taxon>Betaproteobacteria</taxon>
        <taxon>Neisseriales</taxon>
        <taxon>Neisseriaceae</taxon>
        <taxon>Neisseria</taxon>
    </lineage>
</organism>
<accession>A1KRV4</accession>
<protein>
    <recommendedName>
        <fullName evidence="1">Indole-3-glycerol phosphate synthase</fullName>
        <shortName evidence="1">IGPS</shortName>
        <ecNumber evidence="1">4.1.1.48</ecNumber>
    </recommendedName>
</protein>
<gene>
    <name evidence="1" type="primary">trpC</name>
    <name type="ordered locus">NMC0270</name>
</gene>
<keyword id="KW-0028">Amino-acid biosynthesis</keyword>
<keyword id="KW-0057">Aromatic amino acid biosynthesis</keyword>
<keyword id="KW-0210">Decarboxylase</keyword>
<keyword id="KW-0456">Lyase</keyword>
<keyword id="KW-0822">Tryptophan biosynthesis</keyword>
<sequence>MTDILNKILTAKAQEVAAQKAAVNAEHIRALAAEAAPVRSFIGSIRGKHRLNLPAVIAEIKKASPSKGLIRPDFRPAEIARAYENAGAACLSVLTDEPYFQGSPEYLKQAREAVSLPVLRKDFIIDEYQVYQARAWGADAVLLIAAALEQEQLERFEAVAHELGMTVLLELHDESELEKCRNLTTPLWGVNNRNLRTFEVSLDQTLSLLPALEGKTVVTESGITGKADVEFMQSRGVHTFLIGETFMRADNIEAEVGKLF</sequence>